<evidence type="ECO:0000255" key="1">
    <source>
        <dbReference type="HAMAP-Rule" id="MF_00513"/>
    </source>
</evidence>
<evidence type="ECO:0000305" key="2"/>
<accession>P70773</accession>
<sequence>MKALDYKLLLALDAVMQEQNFERAAQRLHITQSAISQRIKQLEQQFAEPLLIRSQPLQATPLGQKLLAHYRQVRQLELELAGEIAPDEPQAPIRVSIAVNADSLATWFLPALAPLLEQHPIELNLLVDDECRTLDRVREGQAFGAVSLHGQPLAGCCVDELGEMRYLLTASPAFVARHFPAGLTPAALAKTPAVAFDQRDDMHVSFMARHFGLEPGGYPCHTVRSSEAFVAMAEQGLAYCLIPELQIRQQLAQGILLDLSPSHHLIEPLYWHRWVLERGLHKQISQRLISEGRRALQPG</sequence>
<dbReference type="EMBL" id="U65741">
    <property type="protein sequence ID" value="AAB70016.1"/>
    <property type="molecule type" value="Genomic_DNA"/>
</dbReference>
<dbReference type="RefSeq" id="WP_005315947.1">
    <property type="nucleotide sequence ID" value="NZ_UFSF01000001.1"/>
</dbReference>
<dbReference type="SMR" id="P70773"/>
<dbReference type="STRING" id="1233098.GCA_000315855_00758"/>
<dbReference type="GO" id="GO:0003677">
    <property type="term" value="F:DNA binding"/>
    <property type="evidence" value="ECO:0007669"/>
    <property type="project" value="UniProtKB-UniRule"/>
</dbReference>
<dbReference type="GO" id="GO:0003700">
    <property type="term" value="F:DNA-binding transcription factor activity"/>
    <property type="evidence" value="ECO:0007669"/>
    <property type="project" value="UniProtKB-UniRule"/>
</dbReference>
<dbReference type="CDD" id="cd08428">
    <property type="entry name" value="PBP2_IciA_ArgP"/>
    <property type="match status" value="1"/>
</dbReference>
<dbReference type="Gene3D" id="3.40.190.290">
    <property type="match status" value="1"/>
</dbReference>
<dbReference type="Gene3D" id="1.10.10.10">
    <property type="entry name" value="Winged helix-like DNA-binding domain superfamily/Winged helix DNA-binding domain"/>
    <property type="match status" value="1"/>
</dbReference>
<dbReference type="HAMAP" id="MF_00513">
    <property type="entry name" value="HTH_type_ArgP"/>
    <property type="match status" value="1"/>
</dbReference>
<dbReference type="InterPro" id="IPR017685">
    <property type="entry name" value="ArgP"/>
</dbReference>
<dbReference type="InterPro" id="IPR023490">
    <property type="entry name" value="ArgP_gammaproteobact"/>
</dbReference>
<dbReference type="InterPro" id="IPR050176">
    <property type="entry name" value="LTTR"/>
</dbReference>
<dbReference type="InterPro" id="IPR005119">
    <property type="entry name" value="LysR_subst-bd"/>
</dbReference>
<dbReference type="InterPro" id="IPR000847">
    <property type="entry name" value="Tscrpt_reg_HTH_LysR"/>
</dbReference>
<dbReference type="InterPro" id="IPR036388">
    <property type="entry name" value="WH-like_DNA-bd_sf"/>
</dbReference>
<dbReference type="InterPro" id="IPR036390">
    <property type="entry name" value="WH_DNA-bd_sf"/>
</dbReference>
<dbReference type="NCBIfam" id="TIGR03298">
    <property type="entry name" value="argP"/>
    <property type="match status" value="1"/>
</dbReference>
<dbReference type="NCBIfam" id="NF002964">
    <property type="entry name" value="PRK03635.1"/>
    <property type="match status" value="1"/>
</dbReference>
<dbReference type="NCBIfam" id="NF009888">
    <property type="entry name" value="PRK13348.1"/>
    <property type="match status" value="1"/>
</dbReference>
<dbReference type="PANTHER" id="PTHR30579:SF2">
    <property type="entry name" value="HTH-TYPE TRANSCRIPTIONAL REGULATOR ARGP"/>
    <property type="match status" value="1"/>
</dbReference>
<dbReference type="PANTHER" id="PTHR30579">
    <property type="entry name" value="TRANSCRIPTIONAL REGULATOR"/>
    <property type="match status" value="1"/>
</dbReference>
<dbReference type="Pfam" id="PF00126">
    <property type="entry name" value="HTH_1"/>
    <property type="match status" value="1"/>
</dbReference>
<dbReference type="Pfam" id="PF03466">
    <property type="entry name" value="LysR_substrate"/>
    <property type="match status" value="1"/>
</dbReference>
<dbReference type="PRINTS" id="PR00039">
    <property type="entry name" value="HTHLYSR"/>
</dbReference>
<dbReference type="SUPFAM" id="SSF53850">
    <property type="entry name" value="Periplasmic binding protein-like II"/>
    <property type="match status" value="1"/>
</dbReference>
<dbReference type="SUPFAM" id="SSF46785">
    <property type="entry name" value="Winged helix' DNA-binding domain"/>
    <property type="match status" value="1"/>
</dbReference>
<dbReference type="PROSITE" id="PS50931">
    <property type="entry name" value="HTH_LYSR"/>
    <property type="match status" value="1"/>
</dbReference>
<proteinExistence type="inferred from homology"/>
<feature type="chain" id="PRO_0000105640" description="HTH-type transcriptional regulator ArgP">
    <location>
        <begin position="1"/>
        <end position="299"/>
    </location>
</feature>
<feature type="domain" description="HTH lysR-type" evidence="1">
    <location>
        <begin position="4"/>
        <end position="60"/>
    </location>
</feature>
<feature type="DNA-binding region" description="H-T-H motif" evidence="1">
    <location>
        <begin position="21"/>
        <end position="40"/>
    </location>
</feature>
<reference key="1">
    <citation type="journal article" date="1997" name="J. Bacteriol.">
        <title>Quorum sensing in Aeromonas hydrophila and Aeromonas salmonicida: identification of the LuxRI homologs AhyRI and AsaRI and their cognate N-acylhomoserine lactone signal molecules.</title>
        <authorList>
            <person name="Swift S."/>
            <person name="Karlyshev A.V."/>
            <person name="Fish L."/>
            <person name="Durant E.L."/>
            <person name="Winson M.K."/>
            <person name="Chhabra S.R."/>
            <person name="Williams P."/>
            <person name="Macintyre S."/>
            <person name="Stewart G.S.A.B."/>
        </authorList>
    </citation>
    <scope>NUCLEOTIDE SEQUENCE [GENOMIC DNA]</scope>
    <source>
        <strain>ATCC 33658 / DSM 19634 / JCM 7874 / NCIMB 1102 / NCTC 12959</strain>
    </source>
</reference>
<name>ARGP_AERSA</name>
<comment type="function">
    <text evidence="1">Controls the transcription of genes involved in arginine and lysine metabolism.</text>
</comment>
<comment type="subunit">
    <text evidence="1">Homodimer.</text>
</comment>
<comment type="similarity">
    <text evidence="2">Belongs to the LysR transcriptional regulatory family.</text>
</comment>
<gene>
    <name evidence="1" type="primary">argP</name>
    <name type="synonym">iciA</name>
</gene>
<organism>
    <name type="scientific">Aeromonas salmonicida</name>
    <dbReference type="NCBI Taxonomy" id="645"/>
    <lineage>
        <taxon>Bacteria</taxon>
        <taxon>Pseudomonadati</taxon>
        <taxon>Pseudomonadota</taxon>
        <taxon>Gammaproteobacteria</taxon>
        <taxon>Aeromonadales</taxon>
        <taxon>Aeromonadaceae</taxon>
        <taxon>Aeromonas</taxon>
    </lineage>
</organism>
<protein>
    <recommendedName>
        <fullName evidence="1">HTH-type transcriptional regulator ArgP</fullName>
    </recommendedName>
</protein>
<keyword id="KW-0238">DNA-binding</keyword>
<keyword id="KW-0804">Transcription</keyword>
<keyword id="KW-0805">Transcription regulation</keyword>